<evidence type="ECO:0000255" key="1">
    <source>
        <dbReference type="HAMAP-Rule" id="MF_01147"/>
    </source>
</evidence>
<dbReference type="EC" id="2.5.1.145" evidence="1"/>
<dbReference type="EMBL" id="CP000111">
    <property type="protein sequence ID" value="ABB49521.1"/>
    <property type="molecule type" value="Genomic_DNA"/>
</dbReference>
<dbReference type="RefSeq" id="WP_011376020.1">
    <property type="nucleotide sequence ID" value="NC_007577.1"/>
</dbReference>
<dbReference type="SMR" id="Q31C74"/>
<dbReference type="STRING" id="74546.PMT9312_0460"/>
<dbReference type="KEGG" id="pmi:PMT9312_0460"/>
<dbReference type="eggNOG" id="COG0682">
    <property type="taxonomic scope" value="Bacteria"/>
</dbReference>
<dbReference type="HOGENOM" id="CLU_013386_1_2_3"/>
<dbReference type="OrthoDB" id="871140at2"/>
<dbReference type="UniPathway" id="UPA00664"/>
<dbReference type="Proteomes" id="UP000002715">
    <property type="component" value="Chromosome"/>
</dbReference>
<dbReference type="GO" id="GO:0005886">
    <property type="term" value="C:plasma membrane"/>
    <property type="evidence" value="ECO:0007669"/>
    <property type="project" value="UniProtKB-SubCell"/>
</dbReference>
<dbReference type="GO" id="GO:0008961">
    <property type="term" value="F:phosphatidylglycerol-prolipoprotein diacylglyceryl transferase activity"/>
    <property type="evidence" value="ECO:0007669"/>
    <property type="project" value="UniProtKB-UniRule"/>
</dbReference>
<dbReference type="GO" id="GO:0042158">
    <property type="term" value="P:lipoprotein biosynthetic process"/>
    <property type="evidence" value="ECO:0007669"/>
    <property type="project" value="UniProtKB-UniRule"/>
</dbReference>
<dbReference type="HAMAP" id="MF_01147">
    <property type="entry name" value="Lgt"/>
    <property type="match status" value="1"/>
</dbReference>
<dbReference type="InterPro" id="IPR001640">
    <property type="entry name" value="Lgt"/>
</dbReference>
<dbReference type="NCBIfam" id="TIGR00544">
    <property type="entry name" value="lgt"/>
    <property type="match status" value="1"/>
</dbReference>
<dbReference type="PANTHER" id="PTHR30589:SF0">
    <property type="entry name" value="PHOSPHATIDYLGLYCEROL--PROLIPOPROTEIN DIACYLGLYCERYL TRANSFERASE"/>
    <property type="match status" value="1"/>
</dbReference>
<dbReference type="PANTHER" id="PTHR30589">
    <property type="entry name" value="PROLIPOPROTEIN DIACYLGLYCERYL TRANSFERASE"/>
    <property type="match status" value="1"/>
</dbReference>
<dbReference type="Pfam" id="PF01790">
    <property type="entry name" value="LGT"/>
    <property type="match status" value="1"/>
</dbReference>
<dbReference type="PROSITE" id="PS01311">
    <property type="entry name" value="LGT"/>
    <property type="match status" value="1"/>
</dbReference>
<sequence>MLIFQAFIQSPGETFLNLGFLTIRWYGFLISVSVIIGLFVSKKLAKARNINPLYISEILPSLIIFSIIGARAYYVIFEWRQYSGENLFTSLELFNNTIQIPSFLAVWEGGIAIHGGLIGGLLSIIYFCKSKNIHLKTFIDILIPSIILGQSIGRWGNFFNNEAFGVPTNLPWKLFIPIQNRPLEFINYEFFHPTFLYESLWNFLIFILLIFVFNKQNKTDFFRPGFISCLYLISYSFGRFWIEGLRTDPLCIGGLPPFCSGGIRMAQFISIFLFSSGLIGIFFLRLRTYSCKNRKNG</sequence>
<protein>
    <recommendedName>
        <fullName evidence="1">Phosphatidylglycerol--prolipoprotein diacylglyceryl transferase</fullName>
        <ecNumber evidence="1">2.5.1.145</ecNumber>
    </recommendedName>
</protein>
<accession>Q31C74</accession>
<keyword id="KW-0997">Cell inner membrane</keyword>
<keyword id="KW-1003">Cell membrane</keyword>
<keyword id="KW-0472">Membrane</keyword>
<keyword id="KW-0808">Transferase</keyword>
<keyword id="KW-0812">Transmembrane</keyword>
<keyword id="KW-1133">Transmembrane helix</keyword>
<feature type="chain" id="PRO_1000053470" description="Phosphatidylglycerol--prolipoprotein diacylglyceryl transferase">
    <location>
        <begin position="1"/>
        <end position="297"/>
    </location>
</feature>
<feature type="transmembrane region" description="Helical" evidence="1">
    <location>
        <begin position="20"/>
        <end position="40"/>
    </location>
</feature>
<feature type="transmembrane region" description="Helical" evidence="1">
    <location>
        <begin position="50"/>
        <end position="70"/>
    </location>
</feature>
<feature type="transmembrane region" description="Helical" evidence="1">
    <location>
        <begin position="105"/>
        <end position="125"/>
    </location>
</feature>
<feature type="transmembrane region" description="Helical" evidence="1">
    <location>
        <begin position="133"/>
        <end position="153"/>
    </location>
</feature>
<feature type="transmembrane region" description="Helical" evidence="1">
    <location>
        <begin position="193"/>
        <end position="213"/>
    </location>
</feature>
<feature type="transmembrane region" description="Helical" evidence="1">
    <location>
        <begin position="225"/>
        <end position="245"/>
    </location>
</feature>
<feature type="transmembrane region" description="Helical" evidence="1">
    <location>
        <begin position="266"/>
        <end position="286"/>
    </location>
</feature>
<feature type="binding site" evidence="1">
    <location>
        <position position="154"/>
    </location>
    <ligand>
        <name>a 1,2-diacyl-sn-glycero-3-phospho-(1'-sn-glycerol)</name>
        <dbReference type="ChEBI" id="CHEBI:64716"/>
    </ligand>
</feature>
<proteinExistence type="inferred from homology"/>
<organism>
    <name type="scientific">Prochlorococcus marinus (strain MIT 9312)</name>
    <dbReference type="NCBI Taxonomy" id="74546"/>
    <lineage>
        <taxon>Bacteria</taxon>
        <taxon>Bacillati</taxon>
        <taxon>Cyanobacteriota</taxon>
        <taxon>Cyanophyceae</taxon>
        <taxon>Synechococcales</taxon>
        <taxon>Prochlorococcaceae</taxon>
        <taxon>Prochlorococcus</taxon>
    </lineage>
</organism>
<reference key="1">
    <citation type="journal article" date="2006" name="Science">
        <title>Genomic islands and the ecology and evolution of Prochlorococcus.</title>
        <authorList>
            <person name="Coleman M.L."/>
            <person name="Sullivan M.B."/>
            <person name="Martiny A.C."/>
            <person name="Steglich C."/>
            <person name="Barry K."/>
            <person name="Delong E.F."/>
            <person name="Chisholm S.W."/>
        </authorList>
    </citation>
    <scope>NUCLEOTIDE SEQUENCE [LARGE SCALE GENOMIC DNA]</scope>
    <source>
        <strain>MIT 9312</strain>
    </source>
</reference>
<comment type="function">
    <text evidence="1">Catalyzes the transfer of the diacylglyceryl group from phosphatidylglycerol to the sulfhydryl group of the N-terminal cysteine of a prolipoprotein, the first step in the formation of mature lipoproteins.</text>
</comment>
<comment type="catalytic activity">
    <reaction evidence="1">
        <text>L-cysteinyl-[prolipoprotein] + a 1,2-diacyl-sn-glycero-3-phospho-(1'-sn-glycerol) = an S-1,2-diacyl-sn-glyceryl-L-cysteinyl-[prolipoprotein] + sn-glycerol 1-phosphate + H(+)</text>
        <dbReference type="Rhea" id="RHEA:56712"/>
        <dbReference type="Rhea" id="RHEA-COMP:14679"/>
        <dbReference type="Rhea" id="RHEA-COMP:14680"/>
        <dbReference type="ChEBI" id="CHEBI:15378"/>
        <dbReference type="ChEBI" id="CHEBI:29950"/>
        <dbReference type="ChEBI" id="CHEBI:57685"/>
        <dbReference type="ChEBI" id="CHEBI:64716"/>
        <dbReference type="ChEBI" id="CHEBI:140658"/>
        <dbReference type="EC" id="2.5.1.145"/>
    </reaction>
</comment>
<comment type="pathway">
    <text evidence="1">Protein modification; lipoprotein biosynthesis (diacylglyceryl transfer).</text>
</comment>
<comment type="subcellular location">
    <subcellularLocation>
        <location evidence="1">Cell inner membrane</location>
        <topology evidence="1">Multi-pass membrane protein</topology>
    </subcellularLocation>
</comment>
<comment type="similarity">
    <text evidence="1">Belongs to the Lgt family.</text>
</comment>
<name>LGT_PROM9</name>
<gene>
    <name evidence="1" type="primary">lgt</name>
    <name type="ordered locus">PMT9312_0460</name>
</gene>